<reference key="1">
    <citation type="journal article" date="2004" name="Nat. Genet.">
        <title>Complete sequencing and characterization of 21,243 full-length human cDNAs.</title>
        <authorList>
            <person name="Ota T."/>
            <person name="Suzuki Y."/>
            <person name="Nishikawa T."/>
            <person name="Otsuki T."/>
            <person name="Sugiyama T."/>
            <person name="Irie R."/>
            <person name="Wakamatsu A."/>
            <person name="Hayashi K."/>
            <person name="Sato H."/>
            <person name="Nagai K."/>
            <person name="Kimura K."/>
            <person name="Makita H."/>
            <person name="Sekine M."/>
            <person name="Obayashi M."/>
            <person name="Nishi T."/>
            <person name="Shibahara T."/>
            <person name="Tanaka T."/>
            <person name="Ishii S."/>
            <person name="Yamamoto J."/>
            <person name="Saito K."/>
            <person name="Kawai Y."/>
            <person name="Isono Y."/>
            <person name="Nakamura Y."/>
            <person name="Nagahari K."/>
            <person name="Murakami K."/>
            <person name="Yasuda T."/>
            <person name="Iwayanagi T."/>
            <person name="Wagatsuma M."/>
            <person name="Shiratori A."/>
            <person name="Sudo H."/>
            <person name="Hosoiri T."/>
            <person name="Kaku Y."/>
            <person name="Kodaira H."/>
            <person name="Kondo H."/>
            <person name="Sugawara M."/>
            <person name="Takahashi M."/>
            <person name="Kanda K."/>
            <person name="Yokoi T."/>
            <person name="Furuya T."/>
            <person name="Kikkawa E."/>
            <person name="Omura Y."/>
            <person name="Abe K."/>
            <person name="Kamihara K."/>
            <person name="Katsuta N."/>
            <person name="Sato K."/>
            <person name="Tanikawa M."/>
            <person name="Yamazaki M."/>
            <person name="Ninomiya K."/>
            <person name="Ishibashi T."/>
            <person name="Yamashita H."/>
            <person name="Murakawa K."/>
            <person name="Fujimori K."/>
            <person name="Tanai H."/>
            <person name="Kimata M."/>
            <person name="Watanabe M."/>
            <person name="Hiraoka S."/>
            <person name="Chiba Y."/>
            <person name="Ishida S."/>
            <person name="Ono Y."/>
            <person name="Takiguchi S."/>
            <person name="Watanabe S."/>
            <person name="Yosida M."/>
            <person name="Hotuta T."/>
            <person name="Kusano J."/>
            <person name="Kanehori K."/>
            <person name="Takahashi-Fujii A."/>
            <person name="Hara H."/>
            <person name="Tanase T.-O."/>
            <person name="Nomura Y."/>
            <person name="Togiya S."/>
            <person name="Komai F."/>
            <person name="Hara R."/>
            <person name="Takeuchi K."/>
            <person name="Arita M."/>
            <person name="Imose N."/>
            <person name="Musashino K."/>
            <person name="Yuuki H."/>
            <person name="Oshima A."/>
            <person name="Sasaki N."/>
            <person name="Aotsuka S."/>
            <person name="Yoshikawa Y."/>
            <person name="Matsunawa H."/>
            <person name="Ichihara T."/>
            <person name="Shiohata N."/>
            <person name="Sano S."/>
            <person name="Moriya S."/>
            <person name="Momiyama H."/>
            <person name="Satoh N."/>
            <person name="Takami S."/>
            <person name="Terashima Y."/>
            <person name="Suzuki O."/>
            <person name="Nakagawa S."/>
            <person name="Senoh A."/>
            <person name="Mizoguchi H."/>
            <person name="Goto Y."/>
            <person name="Shimizu F."/>
            <person name="Wakebe H."/>
            <person name="Hishigaki H."/>
            <person name="Watanabe T."/>
            <person name="Sugiyama A."/>
            <person name="Takemoto M."/>
            <person name="Kawakami B."/>
            <person name="Yamazaki M."/>
            <person name="Watanabe K."/>
            <person name="Kumagai A."/>
            <person name="Itakura S."/>
            <person name="Fukuzumi Y."/>
            <person name="Fujimori Y."/>
            <person name="Komiyama M."/>
            <person name="Tashiro H."/>
            <person name="Tanigami A."/>
            <person name="Fujiwara T."/>
            <person name="Ono T."/>
            <person name="Yamada K."/>
            <person name="Fujii Y."/>
            <person name="Ozaki K."/>
            <person name="Hirao M."/>
            <person name="Ohmori Y."/>
            <person name="Kawabata A."/>
            <person name="Hikiji T."/>
            <person name="Kobatake N."/>
            <person name="Inagaki H."/>
            <person name="Ikema Y."/>
            <person name="Okamoto S."/>
            <person name="Okitani R."/>
            <person name="Kawakami T."/>
            <person name="Noguchi S."/>
            <person name="Itoh T."/>
            <person name="Shigeta K."/>
            <person name="Senba T."/>
            <person name="Matsumura K."/>
            <person name="Nakajima Y."/>
            <person name="Mizuno T."/>
            <person name="Morinaga M."/>
            <person name="Sasaki M."/>
            <person name="Togashi T."/>
            <person name="Oyama M."/>
            <person name="Hata H."/>
            <person name="Watanabe M."/>
            <person name="Komatsu T."/>
            <person name="Mizushima-Sugano J."/>
            <person name="Satoh T."/>
            <person name="Shirai Y."/>
            <person name="Takahashi Y."/>
            <person name="Nakagawa K."/>
            <person name="Okumura K."/>
            <person name="Nagase T."/>
            <person name="Nomura N."/>
            <person name="Kikuchi H."/>
            <person name="Masuho Y."/>
            <person name="Yamashita R."/>
            <person name="Nakai K."/>
            <person name="Yada T."/>
            <person name="Nakamura Y."/>
            <person name="Ohara O."/>
            <person name="Isogai T."/>
            <person name="Sugano S."/>
        </authorList>
    </citation>
    <scope>NUCLEOTIDE SEQUENCE [LARGE SCALE MRNA]</scope>
    <source>
        <tissue>Teratocarcinoma</tissue>
        <tissue>Trachea</tissue>
    </source>
</reference>
<reference key="2">
    <citation type="journal article" date="2004" name="Nature">
        <title>The sequence and analysis of duplication-rich human chromosome 16.</title>
        <authorList>
            <person name="Martin J."/>
            <person name="Han C."/>
            <person name="Gordon L.A."/>
            <person name="Terry A."/>
            <person name="Prabhakar S."/>
            <person name="She X."/>
            <person name="Xie G."/>
            <person name="Hellsten U."/>
            <person name="Chan Y.M."/>
            <person name="Altherr M."/>
            <person name="Couronne O."/>
            <person name="Aerts A."/>
            <person name="Bajorek E."/>
            <person name="Black S."/>
            <person name="Blumer H."/>
            <person name="Branscomb E."/>
            <person name="Brown N.C."/>
            <person name="Bruno W.J."/>
            <person name="Buckingham J.M."/>
            <person name="Callen D.F."/>
            <person name="Campbell C.S."/>
            <person name="Campbell M.L."/>
            <person name="Campbell E.W."/>
            <person name="Caoile C."/>
            <person name="Challacombe J.F."/>
            <person name="Chasteen L.A."/>
            <person name="Chertkov O."/>
            <person name="Chi H.C."/>
            <person name="Christensen M."/>
            <person name="Clark L.M."/>
            <person name="Cohn J.D."/>
            <person name="Denys M."/>
            <person name="Detter J.C."/>
            <person name="Dickson M."/>
            <person name="Dimitrijevic-Bussod M."/>
            <person name="Escobar J."/>
            <person name="Fawcett J.J."/>
            <person name="Flowers D."/>
            <person name="Fotopulos D."/>
            <person name="Glavina T."/>
            <person name="Gomez M."/>
            <person name="Gonzales E."/>
            <person name="Goodstein D."/>
            <person name="Goodwin L.A."/>
            <person name="Grady D.L."/>
            <person name="Grigoriev I."/>
            <person name="Groza M."/>
            <person name="Hammon N."/>
            <person name="Hawkins T."/>
            <person name="Haydu L."/>
            <person name="Hildebrand C.E."/>
            <person name="Huang W."/>
            <person name="Israni S."/>
            <person name="Jett J."/>
            <person name="Jewett P.B."/>
            <person name="Kadner K."/>
            <person name="Kimball H."/>
            <person name="Kobayashi A."/>
            <person name="Krawczyk M.-C."/>
            <person name="Leyba T."/>
            <person name="Longmire J.L."/>
            <person name="Lopez F."/>
            <person name="Lou Y."/>
            <person name="Lowry S."/>
            <person name="Ludeman T."/>
            <person name="Manohar C.F."/>
            <person name="Mark G.A."/>
            <person name="McMurray K.L."/>
            <person name="Meincke L.J."/>
            <person name="Morgan J."/>
            <person name="Moyzis R.K."/>
            <person name="Mundt M.O."/>
            <person name="Munk A.C."/>
            <person name="Nandkeshwar R.D."/>
            <person name="Pitluck S."/>
            <person name="Pollard M."/>
            <person name="Predki P."/>
            <person name="Parson-Quintana B."/>
            <person name="Ramirez L."/>
            <person name="Rash S."/>
            <person name="Retterer J."/>
            <person name="Ricke D.O."/>
            <person name="Robinson D.L."/>
            <person name="Rodriguez A."/>
            <person name="Salamov A."/>
            <person name="Saunders E.H."/>
            <person name="Scott D."/>
            <person name="Shough T."/>
            <person name="Stallings R.L."/>
            <person name="Stalvey M."/>
            <person name="Sutherland R.D."/>
            <person name="Tapia R."/>
            <person name="Tesmer J.G."/>
            <person name="Thayer N."/>
            <person name="Thompson L.S."/>
            <person name="Tice H."/>
            <person name="Torney D.C."/>
            <person name="Tran-Gyamfi M."/>
            <person name="Tsai M."/>
            <person name="Ulanovsky L.E."/>
            <person name="Ustaszewska A."/>
            <person name="Vo N."/>
            <person name="White P.S."/>
            <person name="Williams A.L."/>
            <person name="Wills P.L."/>
            <person name="Wu J.-R."/>
            <person name="Wu K."/>
            <person name="Yang J."/>
            <person name="DeJong P."/>
            <person name="Bruce D."/>
            <person name="Doggett N.A."/>
            <person name="Deaven L."/>
            <person name="Schmutz J."/>
            <person name="Grimwood J."/>
            <person name="Richardson P."/>
            <person name="Rokhsar D.S."/>
            <person name="Eichler E.E."/>
            <person name="Gilna P."/>
            <person name="Lucas S.M."/>
            <person name="Myers R.M."/>
            <person name="Rubin E.M."/>
            <person name="Pennacchio L.A."/>
        </authorList>
    </citation>
    <scope>NUCLEOTIDE SEQUENCE [LARGE SCALE GENOMIC DNA]</scope>
</reference>
<reference key="3">
    <citation type="submission" date="2005-09" db="EMBL/GenBank/DDBJ databases">
        <authorList>
            <person name="Mural R.J."/>
            <person name="Istrail S."/>
            <person name="Sutton G.G."/>
            <person name="Florea L."/>
            <person name="Halpern A.L."/>
            <person name="Mobarry C.M."/>
            <person name="Lippert R."/>
            <person name="Walenz B."/>
            <person name="Shatkay H."/>
            <person name="Dew I."/>
            <person name="Miller J.R."/>
            <person name="Flanigan M.J."/>
            <person name="Edwards N.J."/>
            <person name="Bolanos R."/>
            <person name="Fasulo D."/>
            <person name="Halldorsson B.V."/>
            <person name="Hannenhalli S."/>
            <person name="Turner R."/>
            <person name="Yooseph S."/>
            <person name="Lu F."/>
            <person name="Nusskern D.R."/>
            <person name="Shue B.C."/>
            <person name="Zheng X.H."/>
            <person name="Zhong F."/>
            <person name="Delcher A.L."/>
            <person name="Huson D.H."/>
            <person name="Kravitz S.A."/>
            <person name="Mouchard L."/>
            <person name="Reinert K."/>
            <person name="Remington K.A."/>
            <person name="Clark A.G."/>
            <person name="Waterman M.S."/>
            <person name="Eichler E.E."/>
            <person name="Adams M.D."/>
            <person name="Hunkapiller M.W."/>
            <person name="Myers E.W."/>
            <person name="Venter J.C."/>
        </authorList>
    </citation>
    <scope>NUCLEOTIDE SEQUENCE [LARGE SCALE GENOMIC DNA]</scope>
    <scope>VARIANT VAL-564</scope>
</reference>
<reference key="4">
    <citation type="journal article" date="2004" name="Genome Res.">
        <title>The status, quality, and expansion of the NIH full-length cDNA project: the Mammalian Gene Collection (MGC).</title>
        <authorList>
            <consortium name="The MGC Project Team"/>
        </authorList>
    </citation>
    <scope>NUCLEOTIDE SEQUENCE [LARGE SCALE MRNA]</scope>
    <scope>VARIANTS LYS-392 AND THR-770</scope>
    <source>
        <tissue>Brain</tissue>
        <tissue>Testis</tissue>
    </source>
</reference>
<reference key="5">
    <citation type="journal article" date="2008" name="Proc. Natl. Acad. Sci. U.S.A.">
        <title>A quantitative atlas of mitotic phosphorylation.</title>
        <authorList>
            <person name="Dephoure N."/>
            <person name="Zhou C."/>
            <person name="Villen J."/>
            <person name="Beausoleil S.A."/>
            <person name="Bakalarski C.E."/>
            <person name="Elledge S.J."/>
            <person name="Gygi S.P."/>
        </authorList>
    </citation>
    <scope>IDENTIFICATION BY MASS SPECTROMETRY [LARGE SCALE ANALYSIS]</scope>
    <source>
        <tissue>Cervix carcinoma</tissue>
    </source>
</reference>
<reference key="6">
    <citation type="journal article" date="2010" name="Proc. Natl. Acad. Sci. U.S.A.">
        <title>RFWD3-Mdm2 ubiquitin ligase complex positively regulates p53 stability in response to DNA damage.</title>
        <authorList>
            <person name="Fu X."/>
            <person name="Yucer N."/>
            <person name="Liu S."/>
            <person name="Li M."/>
            <person name="Yi P."/>
            <person name="Mu J.J."/>
            <person name="Yang T."/>
            <person name="Chu J."/>
            <person name="Jung S.Y."/>
            <person name="O'Malley B.W."/>
            <person name="Gu W."/>
            <person name="Qin J."/>
            <person name="Wang Y."/>
        </authorList>
    </citation>
    <scope>FUNCTION</scope>
    <scope>INTERACTION WITH MDM2 AND TP53</scope>
    <scope>SUBCELLULAR LOCATION</scope>
    <scope>PHOSPHORYLATION AT SER-46 AND SER-63</scope>
    <scope>MUTAGENESIS OF SER-46; SER-63 AND CYS-315</scope>
</reference>
<reference key="7">
    <citation type="journal article" date="2011" name="J. Biol. Chem.">
        <title>E3 ligase RFWD3 participates in replication checkpoint control.</title>
        <authorList>
            <person name="Gong Z."/>
            <person name="Chen J."/>
        </authorList>
    </citation>
    <scope>FUNCTION</scope>
    <scope>INTERACTION WITH RPA2</scope>
    <scope>SUBCELLULAR LOCATION</scope>
</reference>
<reference key="8">
    <citation type="journal article" date="2011" name="J. Biol. Chem.">
        <title>RING finger and WD repeat domain 3 (RFWD3) associates with replication protein A (RPA) and facilitates RPA-mediated DNA damage response.</title>
        <authorList>
            <person name="Liu S."/>
            <person name="Chu J."/>
            <person name="Yucer N."/>
            <person name="Leng M."/>
            <person name="Wang S.Y."/>
            <person name="Chen B.P."/>
            <person name="Hittelman W.N."/>
            <person name="Wang Y."/>
        </authorList>
    </citation>
    <scope>FUNCTION</scope>
    <scope>INTERACTION WITH RPA2</scope>
    <scope>SUBCELLULAR LOCATION</scope>
    <scope>PHOSPHORYLATION</scope>
    <scope>DEVELOPMENTAL STAGE</scope>
    <scope>MUTAGENESIS OF CYS-315</scope>
</reference>
<reference key="9">
    <citation type="journal article" date="2013" name="J. Proteome Res.">
        <title>Toward a comprehensive characterization of a human cancer cell phosphoproteome.</title>
        <authorList>
            <person name="Zhou H."/>
            <person name="Di Palma S."/>
            <person name="Preisinger C."/>
            <person name="Peng M."/>
            <person name="Polat A.N."/>
            <person name="Heck A.J."/>
            <person name="Mohammed S."/>
        </authorList>
    </citation>
    <scope>IDENTIFICATION BY MASS SPECTROMETRY [LARGE SCALE ANALYSIS]</scope>
    <source>
        <tissue>Erythroleukemia</tissue>
    </source>
</reference>
<reference key="10">
    <citation type="journal article" date="2015" name="Mol. Cell">
        <title>RFWD3-dependent ubiquitination of RPA regulates repair at stalled replication forks.</title>
        <authorList>
            <person name="Elia A.E."/>
            <person name="Wang D.C."/>
            <person name="Willis N.A."/>
            <person name="Boardman A.P."/>
            <person name="Hajdu I."/>
            <person name="Adeyemi R.O."/>
            <person name="Lowry E."/>
            <person name="Gygi S.P."/>
            <person name="Scully R."/>
            <person name="Elledge S.J."/>
        </authorList>
    </citation>
    <scope>FUNCTION</scope>
    <scope>CATALYTIC ACTIVITY</scope>
</reference>
<reference key="11">
    <citation type="journal article" date="2017" name="Mol. Cell">
        <title>RPA-mediated recruitment of the E3 ligase RFWD3 is vital for interstrand crosslink repair and human health.</title>
        <authorList>
            <person name="Feeney L."/>
            <person name="Munoz I.M."/>
            <person name="Lachaud C."/>
            <person name="Toth R."/>
            <person name="Appleton P.L."/>
            <person name="Schindler D."/>
            <person name="Rouse J."/>
        </authorList>
    </citation>
    <scope>FUNCTION</scope>
    <scope>CATALYTIC ACTIVITY</scope>
    <scope>SUBCELLULAR LOCATION</scope>
    <scope>PHOSPHORYLATION AT SER-46 AND SER-63</scope>
    <scope>INVOLVEMENT IN FANCW</scope>
    <scope>VARIANT FANCW LYS-639</scope>
    <scope>CHARACTERIZATION OF VARIANT FANCW LYS-639</scope>
    <scope>MUTAGENESIS OF CYS-315; GLN-499; LEU-518 AND TRP-543</scope>
</reference>
<reference key="12">
    <citation type="journal article" date="2017" name="J. Clin. Invest.">
        <title>Biallelic mutations in the ubiquitin ligase RFWD3 cause Fanconi anemia.</title>
        <authorList>
            <person name="Knies K."/>
            <person name="Inano S."/>
            <person name="Ramirez M.J."/>
            <person name="Ishiai M."/>
            <person name="Surralles J."/>
            <person name="Takata M."/>
            <person name="Schindler D."/>
        </authorList>
    </citation>
    <scope>FUNCTION</scope>
    <scope>SUBCELLULAR LOCATION</scope>
    <scope>INVOLVEMENT IN FANCW</scope>
    <scope>VARIANT FANCW LYS-639</scope>
    <scope>CHARACTERIZATION OF VARIANT FANCW LYS-639</scope>
</reference>
<reference key="13">
    <citation type="journal article" date="2017" name="Mol. Cell">
        <title>RFWD3-mediated ubiquitination promotes timely removal of both RPA and RAD51 from dna damage sites to facilitate homologous recombination.</title>
        <authorList>
            <person name="Inano S."/>
            <person name="Sato K."/>
            <person name="Katsuki Y."/>
            <person name="Kobayashi W."/>
            <person name="Tanaka H."/>
            <person name="Nakajima K."/>
            <person name="Nakada S."/>
            <person name="Miyoshi H."/>
            <person name="Knies K."/>
            <person name="Takaori-Kondo A."/>
            <person name="Schindler D."/>
            <person name="Ishiai M."/>
            <person name="Kurumizaka H."/>
            <person name="Takata M."/>
        </authorList>
    </citation>
    <scope>FUNCTION</scope>
    <scope>CATALYTIC ACTIVITY</scope>
    <scope>PHOSPHORYLATION AT SER-46 AND SER-63</scope>
    <scope>MUTAGENESIS OF 36-LEU--PRO-38; 53-LEU--PRO-55; 70-LEU--PRO-72 AND CYS-315</scope>
</reference>
<reference key="14">
    <citation type="journal article" date="2021" name="Mol. Cell">
        <title>The ubiquitin ligase RFWD3 is required for translesion DNA synthesis.</title>
        <authorList>
            <person name="Gallina I."/>
            <person name="Hendriks I.A."/>
            <person name="Hoffmann S."/>
            <person name="Larsen N.B."/>
            <person name="Johansen J."/>
            <person name="Colding-Christensen C.S."/>
            <person name="Schubert L."/>
            <person name="Selles-Baiget S."/>
            <person name="Fabian Z."/>
            <person name="Kuehbacher U."/>
            <person name="Gao A.O."/>
            <person name="Raeschle M."/>
            <person name="Rasmussen S."/>
            <person name="Nielsen M.L."/>
            <person name="Mailand N."/>
            <person name="Duxin J.P."/>
        </authorList>
    </citation>
    <scope>FUNCTION</scope>
</reference>
<name>RFWD3_HUMAN</name>
<accession>Q6PCD5</accession>
<accession>A8K585</accession>
<accession>B2RE35</accession>
<accession>D3DUJ8</accession>
<accession>Q5XKR3</accession>
<accession>Q9H9Q3</accession>
<accession>Q9NVT4</accession>
<sequence length="774" mass="85094">MAHEAMEYDVQVQLNHAEQQPAPAGMASSQGGPALLQPVPADVVSSQGVPSILQPAPAEVISSQATPPLLQPAPQLSVDLTEVEVLGEDTVENINPRTSEQHRQGSDGNHTIPASSLHSMTNFISGLQRLHGMLEFLRPSSSNHSVGPMRTRRRVSASRRARAGGSQRTDSARLRAPLDAYFQVSRTQPDLPATTYDSETRNPVSEELQVSSSSDSDSDSSAEYGGVVDQAEESGAVILEEQLAGVSAEQEVTCIDGGKTLPKQPSPQKSEPLLPSASMDEEEGDTCTICLEQWTNAGDHRLSALRCGHLFGYRCISTWLKGQVRKCPQCNKKARHSDIVVLYARTLRALDTSEQERMKSSLLKEQMLRKQAELESAQCRLQLQVLTDKCTRLQRRVQDLQKLTSHQSQNLQQPRGSQAWVLSCSPSSQGQHKHKYHFQKTFTVSQAGNCRIMAYCDALSCLVISQPSPQASFLPGFGVKMLSTANMKSSQYIPMHGKQIRGLAFSSYLRGLLLSASLDNTIKLTSLETNTVVQTYNAGRPVWSCCWCLDEANYIYAGLANGSILVYDVRNTSSHVQELVAQKARCPLVSLSYMPRAASAAFPYGGVLAGTLEDASFWEQKMDFSHWPHVLPLEPGGCIDFQTENSSRHCLVTYRPDKNHTTIRSVLMEMSYRLDDTGNPICSCQPVHTFFGGPTCKLLTKNAIFQSPENDGNILVCTGDEAANSALLWDAASGSLLQDLQTDQPVLDICPFEVNRNSYLATLTEKMVHIYKWE</sequence>
<evidence type="ECO:0000255" key="1"/>
<evidence type="ECO:0000255" key="2">
    <source>
        <dbReference type="PROSITE-ProRule" id="PRU00175"/>
    </source>
</evidence>
<evidence type="ECO:0000256" key="3">
    <source>
        <dbReference type="SAM" id="MobiDB-lite"/>
    </source>
</evidence>
<evidence type="ECO:0000269" key="4">
    <source>
    </source>
</evidence>
<evidence type="ECO:0000269" key="5">
    <source>
    </source>
</evidence>
<evidence type="ECO:0000269" key="6">
    <source>
    </source>
</evidence>
<evidence type="ECO:0000269" key="7">
    <source>
    </source>
</evidence>
<evidence type="ECO:0000269" key="8">
    <source>
    </source>
</evidence>
<evidence type="ECO:0000269" key="9">
    <source>
    </source>
</evidence>
<evidence type="ECO:0000269" key="10">
    <source>
    </source>
</evidence>
<evidence type="ECO:0000269" key="11">
    <source>
    </source>
</evidence>
<evidence type="ECO:0000269" key="12">
    <source>
    </source>
</evidence>
<evidence type="ECO:0000269" key="13">
    <source ref="3"/>
</evidence>
<evidence type="ECO:0000305" key="14"/>
<evidence type="ECO:0000312" key="15">
    <source>
        <dbReference type="HGNC" id="HGNC:25539"/>
    </source>
</evidence>
<evidence type="ECO:0007829" key="16">
    <source>
        <dbReference type="PDB" id="6CVZ"/>
    </source>
</evidence>
<organism>
    <name type="scientific">Homo sapiens</name>
    <name type="common">Human</name>
    <dbReference type="NCBI Taxonomy" id="9606"/>
    <lineage>
        <taxon>Eukaryota</taxon>
        <taxon>Metazoa</taxon>
        <taxon>Chordata</taxon>
        <taxon>Craniata</taxon>
        <taxon>Vertebrata</taxon>
        <taxon>Euteleostomi</taxon>
        <taxon>Mammalia</taxon>
        <taxon>Eutheria</taxon>
        <taxon>Euarchontoglires</taxon>
        <taxon>Primates</taxon>
        <taxon>Haplorrhini</taxon>
        <taxon>Catarrhini</taxon>
        <taxon>Hominidae</taxon>
        <taxon>Homo</taxon>
    </lineage>
</organism>
<feature type="chain" id="PRO_0000278234" description="E3 ubiquitin-protein ligase RFWD3">
    <location>
        <begin position="1"/>
        <end position="774"/>
    </location>
</feature>
<feature type="repeat" description="WD 1">
    <location>
        <begin position="495"/>
        <end position="537"/>
    </location>
</feature>
<feature type="repeat" description="WD 2">
    <location>
        <begin position="539"/>
        <end position="577"/>
    </location>
</feature>
<feature type="repeat" description="WD 3">
    <location>
        <begin position="583"/>
        <end position="628"/>
    </location>
</feature>
<feature type="zinc finger region" description="RING-type; degenerate" evidence="2">
    <location>
        <begin position="287"/>
        <end position="331"/>
    </location>
</feature>
<feature type="region of interest" description="Disordered" evidence="3">
    <location>
        <begin position="95"/>
        <end position="116"/>
    </location>
</feature>
<feature type="region of interest" description="Disordered" evidence="3">
    <location>
        <begin position="139"/>
        <end position="225"/>
    </location>
</feature>
<feature type="region of interest" description="Disordered" evidence="3">
    <location>
        <begin position="257"/>
        <end position="280"/>
    </location>
</feature>
<feature type="coiled-coil region" evidence="1">
    <location>
        <begin position="361"/>
        <end position="413"/>
    </location>
</feature>
<feature type="compositionally biased region" description="Polar residues" evidence="3">
    <location>
        <begin position="106"/>
        <end position="116"/>
    </location>
</feature>
<feature type="compositionally biased region" description="Basic residues" evidence="3">
    <location>
        <begin position="150"/>
        <end position="162"/>
    </location>
</feature>
<feature type="compositionally biased region" description="Low complexity" evidence="3">
    <location>
        <begin position="211"/>
        <end position="221"/>
    </location>
</feature>
<feature type="modified residue" description="Phosphoserine; by ATM and ATR" evidence="5 9 10">
    <location>
        <position position="46"/>
    </location>
</feature>
<feature type="modified residue" description="Phosphoserine; by ATM and ATR" evidence="5 9 10">
    <location>
        <position position="63"/>
    </location>
</feature>
<feature type="sequence variant" id="VAR_030700" description="In dbSNP:rs8058922.">
    <original>T</original>
    <variation>N</variation>
    <location>
        <position position="90"/>
    </location>
</feature>
<feature type="sequence variant" id="VAR_030701" description="In dbSNP:rs17854997." evidence="4">
    <original>R</original>
    <variation>K</variation>
    <location>
        <position position="392"/>
    </location>
</feature>
<feature type="sequence variant" id="VAR_030702" description="In dbSNP:rs7193541." evidence="13">
    <original>I</original>
    <variation>V</variation>
    <location>
        <position position="564"/>
    </location>
</feature>
<feature type="sequence variant" id="VAR_078953" description="In FANCW; abolishes interaction with the RPA complex and subsequent recruitment of the protein at DNA damage sites; decreased function in double-strand break repair via homologous recombination; dbSNP:rs1555524842." evidence="9 11">
    <original>I</original>
    <variation>K</variation>
    <location>
        <position position="639"/>
    </location>
</feature>
<feature type="sequence variant" id="VAR_030703" description="In dbSNP:rs17854996." evidence="4">
    <original>I</original>
    <variation>T</variation>
    <location>
        <position position="770"/>
    </location>
</feature>
<feature type="mutagenesis site" description="Decreased interaction with RAD51; when associated with 53-A--A-55 and 70-A--A-72." evidence="10">
    <original>LQP</original>
    <variation>AAA</variation>
    <location>
        <begin position="36"/>
        <end position="38"/>
    </location>
</feature>
<feature type="mutagenesis site" description="Markedly decreases phosphorylation following ionizing radiation and abolishes ability to stimulate p53/TP53 ubiquitination; when associated with A-63." evidence="5">
    <original>S</original>
    <variation>A</variation>
    <location>
        <position position="46"/>
    </location>
</feature>
<feature type="mutagenesis site" description="Decreased interaction with RAD51; when associated with 36-A--A-38 and 70-A--A-72." evidence="10">
    <original>LQP</original>
    <variation>AAA</variation>
    <location>
        <begin position="53"/>
        <end position="55"/>
    </location>
</feature>
<feature type="mutagenesis site" description="Markedly decreases phosphorylation following ionizing radiation and abolishes ability to stimulate p53/TP53 ubiquitination; when associated with A-46." evidence="5">
    <original>S</original>
    <variation>A</variation>
    <location>
        <position position="63"/>
    </location>
</feature>
<feature type="mutagenesis site" description="Decreased interaction with RAD51; when associated with 36-A--A-38 and 53-A--A-55." evidence="10">
    <original>LQP</original>
    <variation>AAA</variation>
    <location>
        <begin position="70"/>
        <end position="72"/>
    </location>
</feature>
<feature type="mutagenesis site" description="Abolishes ability to stimulate p53/TP53 ubiquitination. No effect on nuclear localization in response to DNA damage." evidence="5 7 9 10">
    <original>C</original>
    <variation>A</variation>
    <location>
        <position position="315"/>
    </location>
</feature>
<feature type="mutagenesis site" description="Does not affect interaction with the RPA complex and subsequent recruitment at DNA damage sites." evidence="9">
    <original>Q</original>
    <variation>A</variation>
    <location>
        <position position="499"/>
    </location>
</feature>
<feature type="mutagenesis site" description="Does not affect interaction with the RPA complex and subsequent recruitment at DNA damage sites." evidence="9">
    <original>L</original>
    <variation>A</variation>
    <location>
        <position position="518"/>
    </location>
</feature>
<feature type="mutagenesis site" description="Abolishes interaction with the RPA complex and subsequent recruitment at DNA damage sites." evidence="9">
    <original>W</original>
    <variation>A</variation>
    <location>
        <position position="543"/>
    </location>
</feature>
<feature type="sequence conflict" description="In Ref. 1; BAF83889." evidence="14" ref="1">
    <original>S</original>
    <variation>P</variation>
    <location>
        <position position="221"/>
    </location>
</feature>
<feature type="sequence conflict" description="In Ref. 1; BAA91662." evidence="14" ref="1">
    <original>A</original>
    <variation>T</variation>
    <location>
        <position position="552"/>
    </location>
</feature>
<feature type="sequence conflict" description="In Ref. 1; BAA91662." evidence="14" ref="1">
    <original>A</original>
    <variation>V</variation>
    <location>
        <position position="597"/>
    </location>
</feature>
<feature type="sequence conflict" description="In Ref. 1; BAB14169." evidence="14" ref="1">
    <original>Q</original>
    <variation>R</variation>
    <location>
        <position position="741"/>
    </location>
</feature>
<feature type="strand" evidence="16">
    <location>
        <begin position="435"/>
        <end position="443"/>
    </location>
</feature>
<feature type="strand" evidence="16">
    <location>
        <begin position="453"/>
        <end position="456"/>
    </location>
</feature>
<feature type="turn" evidence="16">
    <location>
        <begin position="457"/>
        <end position="460"/>
    </location>
</feature>
<feature type="strand" evidence="16">
    <location>
        <begin position="461"/>
        <end position="467"/>
    </location>
</feature>
<feature type="turn" evidence="16">
    <location>
        <begin position="470"/>
        <end position="472"/>
    </location>
</feature>
<feature type="strand" evidence="16">
    <location>
        <begin position="475"/>
        <end position="483"/>
    </location>
</feature>
<feature type="turn" evidence="16">
    <location>
        <begin position="484"/>
        <end position="487"/>
    </location>
</feature>
<feature type="strand" evidence="16">
    <location>
        <begin position="491"/>
        <end position="498"/>
    </location>
</feature>
<feature type="strand" evidence="16">
    <location>
        <begin position="500"/>
        <end position="505"/>
    </location>
</feature>
<feature type="strand" evidence="16">
    <location>
        <begin position="507"/>
        <end position="509"/>
    </location>
</feature>
<feature type="strand" evidence="16">
    <location>
        <begin position="512"/>
        <end position="517"/>
    </location>
</feature>
<feature type="strand" evidence="16">
    <location>
        <begin position="520"/>
        <end position="526"/>
    </location>
</feature>
<feature type="turn" evidence="16">
    <location>
        <begin position="527"/>
        <end position="530"/>
    </location>
</feature>
<feature type="strand" evidence="16">
    <location>
        <begin position="531"/>
        <end position="537"/>
    </location>
</feature>
<feature type="strand" evidence="16">
    <location>
        <begin position="542"/>
        <end position="547"/>
    </location>
</feature>
<feature type="strand" evidence="16">
    <location>
        <begin position="550"/>
        <end position="552"/>
    </location>
</feature>
<feature type="strand" evidence="16">
    <location>
        <begin position="554"/>
        <end position="559"/>
    </location>
</feature>
<feature type="strand" evidence="16">
    <location>
        <begin position="564"/>
        <end position="568"/>
    </location>
</feature>
<feature type="strand" evidence="16">
    <location>
        <begin position="572"/>
        <end position="574"/>
    </location>
</feature>
<feature type="strand" evidence="16">
    <location>
        <begin position="576"/>
        <end position="579"/>
    </location>
</feature>
<feature type="strand" evidence="16">
    <location>
        <begin position="588"/>
        <end position="594"/>
    </location>
</feature>
<feature type="strand" evidence="16">
    <location>
        <begin position="606"/>
        <end position="611"/>
    </location>
</feature>
<feature type="strand" evidence="16">
    <location>
        <begin position="614"/>
        <end position="620"/>
    </location>
</feature>
<feature type="strand" evidence="16">
    <location>
        <begin position="626"/>
        <end position="630"/>
    </location>
</feature>
<feature type="strand" evidence="16">
    <location>
        <begin position="635"/>
        <end position="644"/>
    </location>
</feature>
<feature type="turn" evidence="16">
    <location>
        <begin position="645"/>
        <end position="648"/>
    </location>
</feature>
<feature type="strand" evidence="16">
    <location>
        <begin position="649"/>
        <end position="660"/>
    </location>
</feature>
<feature type="strand" evidence="16">
    <location>
        <begin position="664"/>
        <end position="674"/>
    </location>
</feature>
<feature type="strand" evidence="16">
    <location>
        <begin position="680"/>
        <end position="691"/>
    </location>
</feature>
<feature type="strand" evidence="16">
    <location>
        <begin position="703"/>
        <end position="706"/>
    </location>
</feature>
<feature type="strand" evidence="16">
    <location>
        <begin position="714"/>
        <end position="718"/>
    </location>
</feature>
<feature type="strand" evidence="16">
    <location>
        <begin position="725"/>
        <end position="730"/>
    </location>
</feature>
<feature type="turn" evidence="16">
    <location>
        <begin position="731"/>
        <end position="733"/>
    </location>
</feature>
<feature type="strand" evidence="16">
    <location>
        <begin position="736"/>
        <end position="741"/>
    </location>
</feature>
<feature type="strand" evidence="16">
    <location>
        <begin position="748"/>
        <end position="754"/>
    </location>
</feature>
<feature type="strand" evidence="16">
    <location>
        <begin position="757"/>
        <end position="763"/>
    </location>
</feature>
<feature type="strand" evidence="16">
    <location>
        <begin position="765"/>
        <end position="774"/>
    </location>
</feature>
<gene>
    <name evidence="15" type="primary">RFWD3</name>
    <name evidence="15" type="synonym">RNF201</name>
</gene>
<keyword id="KW-0002">3D-structure</keyword>
<keyword id="KW-0175">Coiled coil</keyword>
<keyword id="KW-0963">Cytoplasm</keyword>
<keyword id="KW-0225">Disease variant</keyword>
<keyword id="KW-0227">DNA damage</keyword>
<keyword id="KW-0234">DNA repair</keyword>
<keyword id="KW-0923">Fanconi anemia</keyword>
<keyword id="KW-0479">Metal-binding</keyword>
<keyword id="KW-0539">Nucleus</keyword>
<keyword id="KW-0597">Phosphoprotein</keyword>
<keyword id="KW-1267">Proteomics identification</keyword>
<keyword id="KW-1185">Reference proteome</keyword>
<keyword id="KW-0677">Repeat</keyword>
<keyword id="KW-0808">Transferase</keyword>
<keyword id="KW-0833">Ubl conjugation pathway</keyword>
<keyword id="KW-0853">WD repeat</keyword>
<keyword id="KW-0862">Zinc</keyword>
<keyword id="KW-0863">Zinc-finger</keyword>
<comment type="function">
    <text evidence="5 6 7 8 9 10 11 12">E3 ubiquitin-protein ligase required for the repair of DNA interstrand cross-links (ICL) in response to DNA damage (PubMed:21504906, PubMed:21558276, PubMed:26474068, PubMed:28575657, PubMed:28575658, PubMed:33321094). Plays a key role in RPA-mediated DNA damage signaling and repair (PubMed:21504906, PubMed:21558276, PubMed:26474068, PubMed:28575657, PubMed:28575658, PubMed:28691929). Acts by mediating ubiquitination of the RPA complex (RPA1, RPA2 and RPA3 subunits) and RAD51 at stalled replication forks, leading to remove them from DNA damage sites and promote homologous recombination (PubMed:26474068, PubMed:28575657, PubMed:28575658). Also mediates the ubiquitination of p53/TP53 in the late response to DNA damage, and acts as a positive regulator of p53/TP53 stability, thereby regulating the G1/S DNA damage checkpoint (PubMed:20173098). May act by catalyzing the formation of short polyubiquitin chains on p53/TP53 that are not targeted to the proteasome (PubMed:20173098). In response to ionizing radiation, interacts with MDM2 and enhances p53/TP53 ubiquitination, possibly by restricting MDM2 from extending polyubiquitin chains on ubiquitinated p53/TP53 (PubMed:20173098). Required to translesion DNA synthesis across DNA-protein cross-link adducts by catalyzing ubiquitination of proteins on single-stranded DNA (ssDNA) (PubMed:33321094).</text>
</comment>
<comment type="catalytic activity">
    <reaction evidence="8 9 10">
        <text>S-ubiquitinyl-[E2 ubiquitin-conjugating enzyme]-L-cysteine + [acceptor protein]-L-lysine = [E2 ubiquitin-conjugating enzyme]-L-cysteine + N(6)-ubiquitinyl-[acceptor protein]-L-lysine.</text>
        <dbReference type="EC" id="2.3.2.27"/>
    </reaction>
</comment>
<comment type="pathway">
    <text evidence="8 9 10">Protein modification; protein ubiquitination.</text>
</comment>
<comment type="subunit">
    <text evidence="5 6 7 8 10">Interacts with MDM2 and p53/TP53 (PubMed:20173098). Binds to the RPA complex via direct interaction with RPA2 (PubMed:21504906, PubMed:21558276, PubMed:26474068, PubMed:28575658). Interacts with RAD51 (PubMed:28575658).</text>
</comment>
<comment type="interaction">
    <interactant intactId="EBI-2129159">
        <id>Q6PCD5</id>
    </interactant>
    <interactant intactId="EBI-389668">
        <id>Q00987</id>
        <label>MDM2</label>
    </interactant>
    <organismsDiffer>false</organismsDiffer>
    <experiments>2</experiments>
</comment>
<comment type="interaction">
    <interactant intactId="EBI-2129159">
        <id>Q6PCD5</id>
    </interactant>
    <interactant intactId="EBI-5279149">
        <id>Q00987-11</id>
        <label>MDM2</label>
    </interactant>
    <organismsDiffer>false</organismsDiffer>
    <experiments>5</experiments>
</comment>
<comment type="interaction">
    <interactant intactId="EBI-2129159">
        <id>Q6PCD5</id>
    </interactant>
    <interactant intactId="EBI-621404">
        <id>P15927</id>
        <label>RPA2</label>
    </interactant>
    <organismsDiffer>false</organismsDiffer>
    <experiments>3</experiments>
</comment>
<comment type="interaction">
    <interactant intactId="EBI-2129159">
        <id>Q6PCD5</id>
    </interactant>
    <interactant intactId="EBI-366083">
        <id>P04637</id>
        <label>TP53</label>
    </interactant>
    <organismsDiffer>false</organismsDiffer>
    <experiments>5</experiments>
</comment>
<comment type="interaction">
    <interactant intactId="EBI-2129159">
        <id>Q6PCD5</id>
    </interactant>
    <interactant intactId="EBI-1052908">
        <id>P61088</id>
        <label>UBE2N</label>
    </interactant>
    <organismsDiffer>false</organismsDiffer>
    <experiments>2</experiments>
</comment>
<comment type="subcellular location">
    <subcellularLocation>
        <location evidence="5 6 7 9 11">Nucleus</location>
    </subcellularLocation>
    <subcellularLocation>
        <location evidence="7">Nucleus</location>
        <location evidence="7">PML body</location>
    </subcellularLocation>
    <subcellularLocation>
        <location evidence="7 11">Cytoplasm</location>
    </subcellularLocation>
    <text evidence="6 9">In undamaged cells, found both in the cytoplasm and in the nucleus, partially associated with PML nuclear bodies (PubMed:21558276). In response to replication block, such as that caused by hydroxyurea treatment, or to DNA damage caused by ionizing radiations or doxorubicin, recruited to the nucleus, to stalled replication forks or to sites of DNA repair (PubMed:21504906, PubMed:28575657). This recruitment depends upon RPA2 (PubMed:21504906).</text>
</comment>
<comment type="developmental stage">
    <text evidence="7">Up-regulated in the S-G2 phase.</text>
</comment>
<comment type="domain">
    <text evidence="7">The coiled coil domain may be involved in RPA2-binding.</text>
</comment>
<comment type="PTM">
    <text evidence="5 7 9 10">Phosphorylated at Ser-46 and Ser-63 upon DNA damage by ATM or ATR. ATM phosphorylation occurs at early times upon DNA damage, while ATR is the major kinase at later times. Phosphorylation by ATM and ATR is required to stabilize p53/TP53. Part of the phosphorylation depends upon RPA2 presence.</text>
</comment>
<comment type="disease" evidence="9 11">
    <disease id="DI-05128">
        <name>Fanconi anemia, complementation group W</name>
        <acronym>FANCW</acronym>
        <description>A form of Fanconi anemia, a disorder affecting all bone marrow elements and resulting in anemia, leukopenia and thrombopenia. It is associated with cardiac, renal and limb malformations, dermal pigmentary changes, and a predisposition to the development of malignancies. At the cellular level it is associated with hypersensitivity to DNA-damaging agents, chromosomal instability (increased chromosome breakage) and defective DNA repair.</description>
        <dbReference type="MIM" id="617784"/>
    </disease>
    <text>The disease is caused by variants affecting the gene represented in this entry.</text>
</comment>
<comment type="sequence caution" evidence="14">
    <conflict type="erroneous initiation">
        <sequence resource="EMBL-CDS" id="BAA91662"/>
    </conflict>
    <text>Truncated N-terminus.</text>
</comment>
<comment type="sequence caution" evidence="14">
    <conflict type="erroneous initiation">
        <sequence resource="EMBL-CDS" id="BAF83889"/>
    </conflict>
    <text>Truncated N-terminus.</text>
</comment>
<comment type="sequence caution" evidence="14">
    <conflict type="erroneous initiation">
        <sequence resource="EMBL-CDS" id="BAG38132"/>
    </conflict>
    <text>Truncated N-terminus.</text>
</comment>
<proteinExistence type="evidence at protein level"/>
<dbReference type="EC" id="2.3.2.27" evidence="8 9 10"/>
<dbReference type="EMBL" id="AK001382">
    <property type="protein sequence ID" value="BAA91662.1"/>
    <property type="status" value="ALT_INIT"/>
    <property type="molecule type" value="mRNA"/>
</dbReference>
<dbReference type="EMBL" id="AK022673">
    <property type="protein sequence ID" value="BAB14169.1"/>
    <property type="molecule type" value="mRNA"/>
</dbReference>
<dbReference type="EMBL" id="AK291200">
    <property type="protein sequence ID" value="BAF83889.1"/>
    <property type="status" value="ALT_INIT"/>
    <property type="molecule type" value="mRNA"/>
</dbReference>
<dbReference type="EMBL" id="AK315786">
    <property type="protein sequence ID" value="BAG38132.1"/>
    <property type="status" value="ALT_INIT"/>
    <property type="molecule type" value="mRNA"/>
</dbReference>
<dbReference type="EMBL" id="AC109599">
    <property type="status" value="NOT_ANNOTATED_CDS"/>
    <property type="molecule type" value="Genomic_DNA"/>
</dbReference>
<dbReference type="EMBL" id="CH471114">
    <property type="protein sequence ID" value="EAW95680.1"/>
    <property type="molecule type" value="Genomic_DNA"/>
</dbReference>
<dbReference type="EMBL" id="CH471114">
    <property type="protein sequence ID" value="EAW95681.1"/>
    <property type="molecule type" value="Genomic_DNA"/>
</dbReference>
<dbReference type="EMBL" id="BC002574">
    <property type="protein sequence ID" value="AAH02574.2"/>
    <property type="molecule type" value="mRNA"/>
</dbReference>
<dbReference type="EMBL" id="BC059371">
    <property type="protein sequence ID" value="AAH59371.2"/>
    <property type="molecule type" value="mRNA"/>
</dbReference>
<dbReference type="CCDS" id="CCDS32486.1"/>
<dbReference type="RefSeq" id="NP_001357463.1">
    <property type="nucleotide sequence ID" value="NM_001370534.1"/>
</dbReference>
<dbReference type="RefSeq" id="NP_001357464.1">
    <property type="nucleotide sequence ID" value="NM_001370535.1"/>
</dbReference>
<dbReference type="RefSeq" id="NP_060594.3">
    <property type="nucleotide sequence ID" value="NM_018124.3"/>
</dbReference>
<dbReference type="RefSeq" id="XP_005256078.1">
    <property type="nucleotide sequence ID" value="XM_005256021.4"/>
</dbReference>
<dbReference type="RefSeq" id="XP_005256079.1">
    <property type="nucleotide sequence ID" value="XM_005256022.5"/>
</dbReference>
<dbReference type="RefSeq" id="XP_011521493.1">
    <property type="nucleotide sequence ID" value="XM_011523191.4"/>
</dbReference>
<dbReference type="RefSeq" id="XP_016878880.1">
    <property type="nucleotide sequence ID" value="XM_017023391.2"/>
</dbReference>
<dbReference type="RefSeq" id="XP_054236617.1">
    <property type="nucleotide sequence ID" value="XM_054380642.1"/>
</dbReference>
<dbReference type="RefSeq" id="XP_054236620.1">
    <property type="nucleotide sequence ID" value="XM_054380645.1"/>
</dbReference>
<dbReference type="RefSeq" id="XP_054236621.1">
    <property type="nucleotide sequence ID" value="XM_054380646.1"/>
</dbReference>
<dbReference type="PDB" id="6CVZ">
    <property type="method" value="X-ray"/>
    <property type="resolution" value="1.80 A"/>
    <property type="chains" value="A/B/C=425-774"/>
</dbReference>
<dbReference type="PDBsum" id="6CVZ"/>
<dbReference type="SMR" id="Q6PCD5"/>
<dbReference type="BioGRID" id="120460">
    <property type="interactions" value="86"/>
</dbReference>
<dbReference type="DIP" id="DIP-52688N"/>
<dbReference type="FunCoup" id="Q6PCD5">
    <property type="interactions" value="3266"/>
</dbReference>
<dbReference type="IntAct" id="Q6PCD5">
    <property type="interactions" value="62"/>
</dbReference>
<dbReference type="MINT" id="Q6PCD5"/>
<dbReference type="STRING" id="9606.ENSP00000354361"/>
<dbReference type="GlyGen" id="Q6PCD5">
    <property type="glycosylation" value="1 site"/>
</dbReference>
<dbReference type="iPTMnet" id="Q6PCD5"/>
<dbReference type="PhosphoSitePlus" id="Q6PCD5"/>
<dbReference type="BioMuta" id="RFWD3"/>
<dbReference type="DMDM" id="126253679"/>
<dbReference type="jPOST" id="Q6PCD5"/>
<dbReference type="MassIVE" id="Q6PCD5"/>
<dbReference type="PaxDb" id="9606-ENSP00000354361"/>
<dbReference type="PeptideAtlas" id="Q6PCD5"/>
<dbReference type="ProteomicsDB" id="67062"/>
<dbReference type="Pumba" id="Q6PCD5"/>
<dbReference type="Antibodypedia" id="30261">
    <property type="antibodies" value="118 antibodies from 25 providers"/>
</dbReference>
<dbReference type="DNASU" id="55159"/>
<dbReference type="Ensembl" id="ENST00000361070.9">
    <property type="protein sequence ID" value="ENSP00000354361.4"/>
    <property type="gene ID" value="ENSG00000168411.14"/>
</dbReference>
<dbReference type="Ensembl" id="ENST00000571750.5">
    <property type="protein sequence ID" value="ENSP00000460049.1"/>
    <property type="gene ID" value="ENSG00000168411.14"/>
</dbReference>
<dbReference type="GeneID" id="55159"/>
<dbReference type="KEGG" id="hsa:55159"/>
<dbReference type="MANE-Select" id="ENST00000361070.9">
    <property type="protein sequence ID" value="ENSP00000354361.4"/>
    <property type="RefSeq nucleotide sequence ID" value="NM_018124.4"/>
    <property type="RefSeq protein sequence ID" value="NP_060594.3"/>
</dbReference>
<dbReference type="UCSC" id="uc002fda.4">
    <property type="organism name" value="human"/>
</dbReference>
<dbReference type="AGR" id="HGNC:25539"/>
<dbReference type="CTD" id="55159"/>
<dbReference type="DisGeNET" id="55159"/>
<dbReference type="GeneCards" id="RFWD3"/>
<dbReference type="GeneReviews" id="RFWD3"/>
<dbReference type="HGNC" id="HGNC:25539">
    <property type="gene designation" value="RFWD3"/>
</dbReference>
<dbReference type="HPA" id="ENSG00000168411">
    <property type="expression patterns" value="Tissue enhanced (bone)"/>
</dbReference>
<dbReference type="MalaCards" id="RFWD3"/>
<dbReference type="MIM" id="614151">
    <property type="type" value="gene"/>
</dbReference>
<dbReference type="MIM" id="617784">
    <property type="type" value="phenotype"/>
</dbReference>
<dbReference type="neXtProt" id="NX_Q6PCD5"/>
<dbReference type="OpenTargets" id="ENSG00000168411"/>
<dbReference type="Orphanet" id="84">
    <property type="disease" value="Fanconi anemia"/>
</dbReference>
<dbReference type="PharmGKB" id="PA134960063"/>
<dbReference type="VEuPathDB" id="HostDB:ENSG00000168411"/>
<dbReference type="eggNOG" id="KOG1645">
    <property type="taxonomic scope" value="Eukaryota"/>
</dbReference>
<dbReference type="GeneTree" id="ENSGT00390000008931"/>
<dbReference type="HOGENOM" id="CLU_021009_1_0_1"/>
<dbReference type="InParanoid" id="Q6PCD5"/>
<dbReference type="OMA" id="CLESWEM"/>
<dbReference type="OrthoDB" id="5600418at2759"/>
<dbReference type="PAN-GO" id="Q6PCD5">
    <property type="GO annotations" value="4 GO annotations based on evolutionary models"/>
</dbReference>
<dbReference type="PhylomeDB" id="Q6PCD5"/>
<dbReference type="TreeFam" id="TF323359"/>
<dbReference type="PathwayCommons" id="Q6PCD5"/>
<dbReference type="SignaLink" id="Q6PCD5"/>
<dbReference type="SIGNOR" id="Q6PCD5"/>
<dbReference type="UniPathway" id="UPA00143"/>
<dbReference type="BioGRID-ORCS" id="55159">
    <property type="hits" value="121 hits in 1198 CRISPR screens"/>
</dbReference>
<dbReference type="CD-CODE" id="B5B9A610">
    <property type="entry name" value="PML body"/>
</dbReference>
<dbReference type="ChiTaRS" id="RFWD3">
    <property type="organism name" value="human"/>
</dbReference>
<dbReference type="GenomeRNAi" id="55159"/>
<dbReference type="Pharos" id="Q6PCD5">
    <property type="development level" value="Tbio"/>
</dbReference>
<dbReference type="PRO" id="PR:Q6PCD5"/>
<dbReference type="Proteomes" id="UP000005640">
    <property type="component" value="Chromosome 16"/>
</dbReference>
<dbReference type="RNAct" id="Q6PCD5">
    <property type="molecule type" value="protein"/>
</dbReference>
<dbReference type="Bgee" id="ENSG00000168411">
    <property type="expression patterns" value="Expressed in oocyte and 143 other cell types or tissues"/>
</dbReference>
<dbReference type="ExpressionAtlas" id="Q6PCD5">
    <property type="expression patterns" value="baseline and differential"/>
</dbReference>
<dbReference type="GO" id="GO:0005737">
    <property type="term" value="C:cytoplasm"/>
    <property type="evidence" value="ECO:0007669"/>
    <property type="project" value="UniProtKB-SubCell"/>
</dbReference>
<dbReference type="GO" id="GO:0005654">
    <property type="term" value="C:nucleoplasm"/>
    <property type="evidence" value="ECO:0000314"/>
    <property type="project" value="HPA"/>
</dbReference>
<dbReference type="GO" id="GO:0005634">
    <property type="term" value="C:nucleus"/>
    <property type="evidence" value="ECO:0000314"/>
    <property type="project" value="UniProtKB"/>
</dbReference>
<dbReference type="GO" id="GO:0016605">
    <property type="term" value="C:PML body"/>
    <property type="evidence" value="ECO:0007669"/>
    <property type="project" value="UniProtKB-SubCell"/>
</dbReference>
<dbReference type="GO" id="GO:0090734">
    <property type="term" value="C:site of DNA damage"/>
    <property type="evidence" value="ECO:0000314"/>
    <property type="project" value="UniProtKB"/>
</dbReference>
<dbReference type="GO" id="GO:0097371">
    <property type="term" value="F:MDM2/MDM4 family protein binding"/>
    <property type="evidence" value="ECO:0000353"/>
    <property type="project" value="UniProtKB"/>
</dbReference>
<dbReference type="GO" id="GO:0002039">
    <property type="term" value="F:p53 binding"/>
    <property type="evidence" value="ECO:0000353"/>
    <property type="project" value="UniProtKB"/>
</dbReference>
<dbReference type="GO" id="GO:0061630">
    <property type="term" value="F:ubiquitin protein ligase activity"/>
    <property type="evidence" value="ECO:0000314"/>
    <property type="project" value="UniProtKB"/>
</dbReference>
<dbReference type="GO" id="GO:0008270">
    <property type="term" value="F:zinc ion binding"/>
    <property type="evidence" value="ECO:0007669"/>
    <property type="project" value="UniProtKB-KW"/>
</dbReference>
<dbReference type="GO" id="GO:0006974">
    <property type="term" value="P:DNA damage response"/>
    <property type="evidence" value="ECO:0000314"/>
    <property type="project" value="UniProtKB"/>
</dbReference>
<dbReference type="GO" id="GO:0000724">
    <property type="term" value="P:double-strand break repair via homologous recombination"/>
    <property type="evidence" value="ECO:0000314"/>
    <property type="project" value="UniProtKB"/>
</dbReference>
<dbReference type="GO" id="GO:0036297">
    <property type="term" value="P:interstrand cross-link repair"/>
    <property type="evidence" value="ECO:0000314"/>
    <property type="project" value="UniProtKB"/>
</dbReference>
<dbReference type="GO" id="GO:0031571">
    <property type="term" value="P:mitotic G1 DNA damage checkpoint signaling"/>
    <property type="evidence" value="ECO:0000315"/>
    <property type="project" value="UniProtKB"/>
</dbReference>
<dbReference type="GO" id="GO:0016567">
    <property type="term" value="P:protein ubiquitination"/>
    <property type="evidence" value="ECO:0000314"/>
    <property type="project" value="UniProtKB"/>
</dbReference>
<dbReference type="GO" id="GO:2000001">
    <property type="term" value="P:regulation of DNA damage checkpoint"/>
    <property type="evidence" value="ECO:0000315"/>
    <property type="project" value="UniProtKB"/>
</dbReference>
<dbReference type="GO" id="GO:0031297">
    <property type="term" value="P:replication fork processing"/>
    <property type="evidence" value="ECO:0000314"/>
    <property type="project" value="UniProtKB"/>
</dbReference>
<dbReference type="GO" id="GO:0010212">
    <property type="term" value="P:response to ionizing radiation"/>
    <property type="evidence" value="ECO:0000314"/>
    <property type="project" value="UniProtKB"/>
</dbReference>
<dbReference type="CDD" id="cd16450">
    <property type="entry name" value="mRING-C3HGC3_RFWD3"/>
    <property type="match status" value="1"/>
</dbReference>
<dbReference type="FunFam" id="3.30.40.10:FF:000832">
    <property type="entry name" value="E3 ubiquitin-protein ligase RFWD3"/>
    <property type="match status" value="1"/>
</dbReference>
<dbReference type="FunFam" id="2.130.10.10:FF:000598">
    <property type="entry name" value="E3 ubiquitin-protein ligase RFWD3 isoform X2"/>
    <property type="match status" value="1"/>
</dbReference>
<dbReference type="Gene3D" id="2.130.10.10">
    <property type="entry name" value="YVTN repeat-like/Quinoprotein amine dehydrogenase"/>
    <property type="match status" value="1"/>
</dbReference>
<dbReference type="Gene3D" id="3.30.40.10">
    <property type="entry name" value="Zinc/RING finger domain, C3HC4 (zinc finger)"/>
    <property type="match status" value="1"/>
</dbReference>
<dbReference type="InterPro" id="IPR037381">
    <property type="entry name" value="RFWD3"/>
</dbReference>
<dbReference type="InterPro" id="IPR015943">
    <property type="entry name" value="WD40/YVTN_repeat-like_dom_sf"/>
</dbReference>
<dbReference type="InterPro" id="IPR036322">
    <property type="entry name" value="WD40_repeat_dom_sf"/>
</dbReference>
<dbReference type="InterPro" id="IPR056527">
    <property type="entry name" value="WD40_RFWD3"/>
</dbReference>
<dbReference type="InterPro" id="IPR001680">
    <property type="entry name" value="WD40_rpt"/>
</dbReference>
<dbReference type="InterPro" id="IPR001841">
    <property type="entry name" value="Znf_RING"/>
</dbReference>
<dbReference type="InterPro" id="IPR013083">
    <property type="entry name" value="Znf_RING/FYVE/PHD"/>
</dbReference>
<dbReference type="PANTHER" id="PTHR16047:SF7">
    <property type="entry name" value="E3 UBIQUITIN-PROTEIN LIGASE RFWD3"/>
    <property type="match status" value="1"/>
</dbReference>
<dbReference type="PANTHER" id="PTHR16047">
    <property type="entry name" value="RFWD3 PROTEIN"/>
    <property type="match status" value="1"/>
</dbReference>
<dbReference type="Pfam" id="PF23419">
    <property type="entry name" value="WD40_RFWD3"/>
    <property type="match status" value="1"/>
</dbReference>
<dbReference type="Pfam" id="PF13639">
    <property type="entry name" value="zf-RING_2"/>
    <property type="match status" value="1"/>
</dbReference>
<dbReference type="SMART" id="SM00184">
    <property type="entry name" value="RING"/>
    <property type="match status" value="1"/>
</dbReference>
<dbReference type="SMART" id="SM00320">
    <property type="entry name" value="WD40"/>
    <property type="match status" value="3"/>
</dbReference>
<dbReference type="SUPFAM" id="SSF57850">
    <property type="entry name" value="RING/U-box"/>
    <property type="match status" value="1"/>
</dbReference>
<dbReference type="SUPFAM" id="SSF50978">
    <property type="entry name" value="WD40 repeat-like"/>
    <property type="match status" value="1"/>
</dbReference>
<dbReference type="PROSITE" id="PS50089">
    <property type="entry name" value="ZF_RING_2"/>
    <property type="match status" value="1"/>
</dbReference>
<protein>
    <recommendedName>
        <fullName evidence="14">E3 ubiquitin-protein ligase RFWD3</fullName>
        <ecNumber evidence="8 9 10">2.3.2.27</ecNumber>
    </recommendedName>
    <alternativeName>
        <fullName>RING finger and WD repeat domain-containing protein 3</fullName>
    </alternativeName>
    <alternativeName>
        <fullName>RING finger protein 201</fullName>
    </alternativeName>
</protein>